<name>SPRT_SHEON</name>
<organism>
    <name type="scientific">Shewanella oneidensis (strain ATCC 700550 / JCM 31522 / CIP 106686 / LMG 19005 / NCIMB 14063 / MR-1)</name>
    <dbReference type="NCBI Taxonomy" id="211586"/>
    <lineage>
        <taxon>Bacteria</taxon>
        <taxon>Pseudomonadati</taxon>
        <taxon>Pseudomonadota</taxon>
        <taxon>Gammaproteobacteria</taxon>
        <taxon>Alteromonadales</taxon>
        <taxon>Shewanellaceae</taxon>
        <taxon>Shewanella</taxon>
    </lineage>
</organism>
<protein>
    <recommendedName>
        <fullName>Protein SprT</fullName>
    </recommendedName>
</protein>
<keyword id="KW-0963">Cytoplasm</keyword>
<keyword id="KW-0479">Metal-binding</keyword>
<keyword id="KW-1185">Reference proteome</keyword>
<keyword id="KW-0862">Zinc</keyword>
<proteinExistence type="inferred from homology"/>
<reference key="1">
    <citation type="journal article" date="2002" name="Nat. Biotechnol.">
        <title>Genome sequence of the dissimilatory metal ion-reducing bacterium Shewanella oneidensis.</title>
        <authorList>
            <person name="Heidelberg J.F."/>
            <person name="Paulsen I.T."/>
            <person name="Nelson K.E."/>
            <person name="Gaidos E.J."/>
            <person name="Nelson W.C."/>
            <person name="Read T.D."/>
            <person name="Eisen J.A."/>
            <person name="Seshadri R."/>
            <person name="Ward N.L."/>
            <person name="Methe B.A."/>
            <person name="Clayton R.A."/>
            <person name="Meyer T."/>
            <person name="Tsapin A."/>
            <person name="Scott J."/>
            <person name="Beanan M.J."/>
            <person name="Brinkac L.M."/>
            <person name="Daugherty S.C."/>
            <person name="DeBoy R.T."/>
            <person name="Dodson R.J."/>
            <person name="Durkin A.S."/>
            <person name="Haft D.H."/>
            <person name="Kolonay J.F."/>
            <person name="Madupu R."/>
            <person name="Peterson J.D."/>
            <person name="Umayam L.A."/>
            <person name="White O."/>
            <person name="Wolf A.M."/>
            <person name="Vamathevan J.J."/>
            <person name="Weidman J.F."/>
            <person name="Impraim M."/>
            <person name="Lee K."/>
            <person name="Berry K.J."/>
            <person name="Lee C."/>
            <person name="Mueller J."/>
            <person name="Khouri H.M."/>
            <person name="Gill J."/>
            <person name="Utterback T.R."/>
            <person name="McDonald L.A."/>
            <person name="Feldblyum T.V."/>
            <person name="Smith H.O."/>
            <person name="Venter J.C."/>
            <person name="Nealson K.H."/>
            <person name="Fraser C.M."/>
        </authorList>
    </citation>
    <scope>NUCLEOTIDE SEQUENCE [LARGE SCALE GENOMIC DNA]</scope>
    <source>
        <strain>ATCC 700550 / JCM 31522 / CIP 106686 / LMG 19005 / NCIMB 14063 / MR-1</strain>
    </source>
</reference>
<sequence length="156" mass="18264">MQQQILERIEDCYQQAEAYFKRAFPRPTTQFTLRGRSAGTAHLQQNRLRFNPVLLRENSEAFLAEVVPHEISHLLCFQIFGKTKPHGREWQSIMLKLFKISPNTTHNFDTQSVKGKDVEYRCACGPIRLGIRRHNKVLRGETRYLCKRCHTHLTLA</sequence>
<feature type="chain" id="PRO_0000213278" description="Protein SprT">
    <location>
        <begin position="1"/>
        <end position="156"/>
    </location>
</feature>
<feature type="domain" description="SprT-like">
    <location>
        <begin position="12"/>
        <end position="154"/>
    </location>
</feature>
<feature type="active site" evidence="1">
    <location>
        <position position="70"/>
    </location>
</feature>
<feature type="binding site" evidence="1">
    <location>
        <position position="69"/>
    </location>
    <ligand>
        <name>Zn(2+)</name>
        <dbReference type="ChEBI" id="CHEBI:29105"/>
    </ligand>
</feature>
<feature type="binding site" evidence="1">
    <location>
        <position position="73"/>
    </location>
    <ligand>
        <name>Zn(2+)</name>
        <dbReference type="ChEBI" id="CHEBI:29105"/>
    </ligand>
</feature>
<accession>Q8EIK5</accession>
<comment type="cofactor">
    <cofactor evidence="2">
        <name>Zn(2+)</name>
        <dbReference type="ChEBI" id="CHEBI:29105"/>
    </cofactor>
    <text evidence="2">Binds 1 zinc ion.</text>
</comment>
<comment type="subcellular location">
    <subcellularLocation>
        <location evidence="2">Cytoplasm</location>
    </subcellularLocation>
</comment>
<comment type="similarity">
    <text evidence="2">Belongs to the SprT family.</text>
</comment>
<comment type="sequence caution" evidence="2">
    <conflict type="erroneous initiation">
        <sequence resource="EMBL-CDS" id="AAN53910"/>
    </conflict>
</comment>
<dbReference type="EMBL" id="AE014299">
    <property type="protein sequence ID" value="AAN53910.1"/>
    <property type="status" value="ALT_INIT"/>
    <property type="molecule type" value="Genomic_DNA"/>
</dbReference>
<dbReference type="RefSeq" id="NP_716465.1">
    <property type="nucleotide sequence ID" value="NC_004347.2"/>
</dbReference>
<dbReference type="RefSeq" id="WP_011071126.1">
    <property type="nucleotide sequence ID" value="NZ_CP053946.1"/>
</dbReference>
<dbReference type="STRING" id="211586.SO_0834"/>
<dbReference type="PaxDb" id="211586-SO_0834"/>
<dbReference type="KEGG" id="son:SO_0834"/>
<dbReference type="PATRIC" id="fig|211586.12.peg.800"/>
<dbReference type="eggNOG" id="COG3091">
    <property type="taxonomic scope" value="Bacteria"/>
</dbReference>
<dbReference type="HOGENOM" id="CLU_113336_0_1_6"/>
<dbReference type="OrthoDB" id="267364at2"/>
<dbReference type="PhylomeDB" id="Q8EIK5"/>
<dbReference type="Proteomes" id="UP000008186">
    <property type="component" value="Chromosome"/>
</dbReference>
<dbReference type="GO" id="GO:0005737">
    <property type="term" value="C:cytoplasm"/>
    <property type="evidence" value="ECO:0007669"/>
    <property type="project" value="UniProtKB-SubCell"/>
</dbReference>
<dbReference type="GO" id="GO:0008270">
    <property type="term" value="F:zinc ion binding"/>
    <property type="evidence" value="ECO:0007669"/>
    <property type="project" value="UniProtKB-UniRule"/>
</dbReference>
<dbReference type="GO" id="GO:0006950">
    <property type="term" value="P:response to stress"/>
    <property type="evidence" value="ECO:0007669"/>
    <property type="project" value="UniProtKB-ARBA"/>
</dbReference>
<dbReference type="HAMAP" id="MF_00746">
    <property type="entry name" value="SprT"/>
    <property type="match status" value="1"/>
</dbReference>
<dbReference type="InterPro" id="IPR006640">
    <property type="entry name" value="SprT-like_domain"/>
</dbReference>
<dbReference type="InterPro" id="IPR023483">
    <property type="entry name" value="Uncharacterised_SprT"/>
</dbReference>
<dbReference type="NCBIfam" id="NF003421">
    <property type="entry name" value="PRK04860.1"/>
    <property type="match status" value="1"/>
</dbReference>
<dbReference type="PANTHER" id="PTHR38773">
    <property type="entry name" value="PROTEIN SPRT"/>
    <property type="match status" value="1"/>
</dbReference>
<dbReference type="PANTHER" id="PTHR38773:SF1">
    <property type="entry name" value="PROTEIN SPRT"/>
    <property type="match status" value="1"/>
</dbReference>
<dbReference type="Pfam" id="PF10263">
    <property type="entry name" value="SprT-like"/>
    <property type="match status" value="1"/>
</dbReference>
<dbReference type="SMART" id="SM00731">
    <property type="entry name" value="SprT"/>
    <property type="match status" value="1"/>
</dbReference>
<dbReference type="PROSITE" id="PS00142">
    <property type="entry name" value="ZINC_PROTEASE"/>
    <property type="match status" value="1"/>
</dbReference>
<gene>
    <name type="primary">sprT</name>
    <name type="ordered locus">SO_0834</name>
</gene>
<evidence type="ECO:0000255" key="1"/>
<evidence type="ECO:0000305" key="2"/>